<keyword id="KW-0007">Acetylation</keyword>
<keyword id="KW-1015">Disulfide bond</keyword>
<keyword id="KW-0249">Electron transport</keyword>
<keyword id="KW-0472">Membrane</keyword>
<keyword id="KW-0496">Mitochondrion</keyword>
<keyword id="KW-0999">Mitochondrion inner membrane</keyword>
<keyword id="KW-1185">Reference proteome</keyword>
<keyword id="KW-0679">Respiratory chain</keyword>
<keyword id="KW-0809">Transit peptide</keyword>
<keyword id="KW-0813">Transport</keyword>
<accession>Q8SPH5</accession>
<dbReference type="EMBL" id="AB072026">
    <property type="protein sequence ID" value="BAB86815.1"/>
    <property type="molecule type" value="mRNA"/>
</dbReference>
<dbReference type="RefSeq" id="XP_005543544.2">
    <property type="nucleotide sequence ID" value="XM_005543487.2"/>
</dbReference>
<dbReference type="SMR" id="Q8SPH5"/>
<dbReference type="STRING" id="9541.ENSMFAP00000033827"/>
<dbReference type="GeneID" id="102136267"/>
<dbReference type="KEGG" id="mcf:102136267"/>
<dbReference type="eggNOG" id="KOG4763">
    <property type="taxonomic scope" value="Eukaryota"/>
</dbReference>
<dbReference type="Proteomes" id="UP000233100">
    <property type="component" value="Unplaced"/>
</dbReference>
<dbReference type="GO" id="GO:0005743">
    <property type="term" value="C:mitochondrial inner membrane"/>
    <property type="evidence" value="ECO:0007669"/>
    <property type="project" value="UniProtKB-SubCell"/>
</dbReference>
<dbReference type="GO" id="GO:0008121">
    <property type="term" value="F:ubiquinol-cytochrome-c reductase activity"/>
    <property type="evidence" value="ECO:0000250"/>
    <property type="project" value="UniProtKB"/>
</dbReference>
<dbReference type="GO" id="GO:0006122">
    <property type="term" value="P:mitochondrial electron transport, ubiquinol to cytochrome c"/>
    <property type="evidence" value="ECO:0007669"/>
    <property type="project" value="InterPro"/>
</dbReference>
<dbReference type="FunFam" id="1.10.287.20:FF:000002">
    <property type="entry name" value="Cytochrome b-c1 complex subunit 6"/>
    <property type="match status" value="1"/>
</dbReference>
<dbReference type="Gene3D" id="1.10.287.20">
    <property type="entry name" value="Ubiquinol-cytochrome C reductase hinge domain"/>
    <property type="match status" value="1"/>
</dbReference>
<dbReference type="InterPro" id="IPR003422">
    <property type="entry name" value="Cyt_b-c1_6"/>
</dbReference>
<dbReference type="InterPro" id="IPR023184">
    <property type="entry name" value="Ubol_cytC_Rdtase_hinge_dom"/>
</dbReference>
<dbReference type="InterPro" id="IPR036811">
    <property type="entry name" value="Ubol_cytC_Rdtase_hinge_dom_sf"/>
</dbReference>
<dbReference type="PANTHER" id="PTHR15336:SF3">
    <property type="entry name" value="CYTOCHROME B-C1 COMPLEX SUBUNIT 6, MITOCHONDRIAL"/>
    <property type="match status" value="1"/>
</dbReference>
<dbReference type="PANTHER" id="PTHR15336">
    <property type="entry name" value="UBIQUINOL-CYTOCHROME C REDUCTASE COMPLEX 7.8 KDA PROTEIN"/>
    <property type="match status" value="1"/>
</dbReference>
<dbReference type="Pfam" id="PF02320">
    <property type="entry name" value="UCR_hinge"/>
    <property type="match status" value="1"/>
</dbReference>
<dbReference type="PIRSF" id="PIRSF000019">
    <property type="entry name" value="Bc1_11K"/>
    <property type="match status" value="1"/>
</dbReference>
<dbReference type="SUPFAM" id="SSF81531">
    <property type="entry name" value="Non-heme 11 kDa protein of cytochrome bc1 complex (Ubiquinol-cytochrome c reductase)"/>
    <property type="match status" value="1"/>
</dbReference>
<evidence type="ECO:0000250" key="1">
    <source>
        <dbReference type="UniProtKB" id="P00126"/>
    </source>
</evidence>
<evidence type="ECO:0000250" key="2">
    <source>
        <dbReference type="UniProtKB" id="P00127"/>
    </source>
</evidence>
<evidence type="ECO:0000250" key="3">
    <source>
        <dbReference type="UniProtKB" id="P07919"/>
    </source>
</evidence>
<evidence type="ECO:0000250" key="4">
    <source>
        <dbReference type="UniProtKB" id="P99028"/>
    </source>
</evidence>
<evidence type="ECO:0000256" key="5">
    <source>
        <dbReference type="SAM" id="MobiDB-lite"/>
    </source>
</evidence>
<evidence type="ECO:0000305" key="6"/>
<gene>
    <name type="primary">UQCRH</name>
    <name type="ORF">QnpA-14164</name>
</gene>
<comment type="function">
    <text evidence="2 3">Component of the ubiquinol-cytochrome c oxidoreductase, a multisubunit transmembrane complex that is part of the mitochondrial electron transport chain which drives oxidative phosphorylation. The respiratory chain contains 3 multisubunit complexes succinate dehydrogenase (complex II, CII), ubiquinol-cytochrome c oxidoreductase (cytochrome b-c1 complex, complex III, CIII) and cytochrome c oxidase (complex IV, CIV), that cooperate to transfer electrons derived from NADH and succinate to molecular oxygen, creating an electrochemical gradient over the inner membrane that drives transmembrane transport and the ATP synthase. The cytochrome b-c1 complex catalyzes electron transfer from ubiquinol to cytochrome c, linking this redox reaction to translocation of protons across the mitochondrial inner membrane, with protons being carried across the membrane as hydrogens on the quinol. In the process called Q cycle, 2 protons are consumed from the matrix, 4 protons are released into the intermembrane space and 2 electrons are passed to cytochrome c.</text>
</comment>
<comment type="subunit">
    <text evidence="1 3">Component of the ubiquinol-cytochrome c oxidoreductase (cytochrome b-c1 complex, complex III, CIII), a multisubunit enzyme composed of 11 subunits. The complex is composed of 3 respiratory subunits cytochrome b, cytochrome c1 and Rieske protein UQCRFS1, 2 core protein subunits UQCRC1/QCR1 and UQCRC2/QCR2, and 6 low-molecular weight protein subunits UQCRH/QCR6, UQCRB/QCR7, UQCRQ/QCR8, UQCR10/QCR9, UQCR11/QCR10 and subunit 9, the cleavage product of Rieske protein UQCRFS1 (By similarity). The complex exists as an obligatory dimer and forms supercomplexes (SCs) in the inner mitochondrial membrane with NADH-ubiquinone oxidoreductase (complex I, CI) and cytochrome c oxidase (complex IV, CIV), resulting in different assemblies (supercomplex SCI(1)III(2)IV(1) and megacomplex MCI(2)III(2)IV(2)) (By similarity).</text>
</comment>
<comment type="subcellular location">
    <subcellularLocation>
        <location evidence="2">Mitochondrion inner membrane</location>
        <topology evidence="2">Peripheral membrane protein</topology>
        <orientation evidence="2">Intermembrane side</orientation>
    </subcellularLocation>
</comment>
<comment type="similarity">
    <text evidence="6">Belongs to the UQCRH/QCR6 family.</text>
</comment>
<feature type="transit peptide" description="Mitochondrion" evidence="4">
    <location>
        <begin position="1"/>
        <end position="13"/>
    </location>
</feature>
<feature type="chain" id="PRO_0000035991" description="Cytochrome b-c1 complex subunit 6, mitochondrial">
    <location>
        <begin position="14"/>
        <end position="91"/>
    </location>
</feature>
<feature type="region of interest" description="Disordered" evidence="5">
    <location>
        <begin position="1"/>
        <end position="30"/>
    </location>
</feature>
<feature type="compositionally biased region" description="Basic and acidic residues" evidence="5">
    <location>
        <begin position="1"/>
        <end position="10"/>
    </location>
</feature>
<feature type="compositionally biased region" description="Acidic residues" evidence="5">
    <location>
        <begin position="17"/>
        <end position="27"/>
    </location>
</feature>
<feature type="modified residue" description="N6-acetyllysine" evidence="4">
    <location>
        <position position="42"/>
    </location>
</feature>
<feature type="modified residue" description="N6-acetyllysine" evidence="4">
    <location>
        <position position="85"/>
    </location>
</feature>
<feature type="disulfide bond" evidence="1">
    <location>
        <begin position="37"/>
        <end position="81"/>
    </location>
</feature>
<feature type="disulfide bond" evidence="1">
    <location>
        <begin position="53"/>
        <end position="67"/>
    </location>
</feature>
<protein>
    <recommendedName>
        <fullName>Cytochrome b-c1 complex subunit 6, mitochondrial</fullName>
    </recommendedName>
    <alternativeName>
        <fullName>Complex III subunit 6</fullName>
    </alternativeName>
    <alternativeName>
        <fullName>Complex III subunit VIII</fullName>
    </alternativeName>
    <alternativeName>
        <fullName>Cytochrome c1 non-heme 11 kDa protein</fullName>
    </alternativeName>
    <alternativeName>
        <fullName>Mitochondrial hinge protein</fullName>
    </alternativeName>
    <alternativeName>
        <fullName>Ubiquinol-cytochrome c reductase complex 11 kDa protein</fullName>
    </alternativeName>
</protein>
<sequence length="91" mass="10776">MGLEDERKMLTESGDPEKEEEEEEELVDPLTTVREQCEQLEKCVKARERLELCDKRVSSRSRTEEDCTEELLDFLHARDHCVAYKLFNNLK</sequence>
<reference key="1">
    <citation type="journal article" date="2002" name="Genomics">
        <title>Search for genes positively selected during primate evolution by 5'-end-sequence screening of cynomolgus monkey cDNAs.</title>
        <authorList>
            <person name="Osada N."/>
            <person name="Kusuda J."/>
            <person name="Hirata M."/>
            <person name="Tanuma R."/>
            <person name="Hida M."/>
            <person name="Sugano S."/>
            <person name="Hirai M."/>
            <person name="Hashimoto K."/>
        </authorList>
    </citation>
    <scope>NUCLEOTIDE SEQUENCE [LARGE SCALE MRNA]</scope>
    <source>
        <tissue>Parietal cortex</tissue>
    </source>
</reference>
<organism>
    <name type="scientific">Macaca fascicularis</name>
    <name type="common">Crab-eating macaque</name>
    <name type="synonym">Cynomolgus monkey</name>
    <dbReference type="NCBI Taxonomy" id="9541"/>
    <lineage>
        <taxon>Eukaryota</taxon>
        <taxon>Metazoa</taxon>
        <taxon>Chordata</taxon>
        <taxon>Craniata</taxon>
        <taxon>Vertebrata</taxon>
        <taxon>Euteleostomi</taxon>
        <taxon>Mammalia</taxon>
        <taxon>Eutheria</taxon>
        <taxon>Euarchontoglires</taxon>
        <taxon>Primates</taxon>
        <taxon>Haplorrhini</taxon>
        <taxon>Catarrhini</taxon>
        <taxon>Cercopithecidae</taxon>
        <taxon>Cercopithecinae</taxon>
        <taxon>Macaca</taxon>
    </lineage>
</organism>
<proteinExistence type="inferred from homology"/>
<name>QCR6_MACFA</name>